<proteinExistence type="inferred from homology"/>
<comment type="catalytic activity">
    <reaction evidence="1">
        <text>(6R)-10-formyltetrahydrofolate + 5-amino-1-(5-phospho-beta-D-ribosyl)imidazole-4-carboxamide = 5-formamido-1-(5-phospho-D-ribosyl)imidazole-4-carboxamide + (6S)-5,6,7,8-tetrahydrofolate</text>
        <dbReference type="Rhea" id="RHEA:22192"/>
        <dbReference type="ChEBI" id="CHEBI:57453"/>
        <dbReference type="ChEBI" id="CHEBI:58467"/>
        <dbReference type="ChEBI" id="CHEBI:58475"/>
        <dbReference type="ChEBI" id="CHEBI:195366"/>
        <dbReference type="EC" id="2.1.2.3"/>
    </reaction>
</comment>
<comment type="catalytic activity">
    <reaction evidence="1">
        <text>IMP + H2O = 5-formamido-1-(5-phospho-D-ribosyl)imidazole-4-carboxamide</text>
        <dbReference type="Rhea" id="RHEA:18445"/>
        <dbReference type="ChEBI" id="CHEBI:15377"/>
        <dbReference type="ChEBI" id="CHEBI:58053"/>
        <dbReference type="ChEBI" id="CHEBI:58467"/>
        <dbReference type="EC" id="3.5.4.10"/>
    </reaction>
</comment>
<comment type="pathway">
    <text evidence="1">Purine metabolism; IMP biosynthesis via de novo pathway; 5-formamido-1-(5-phospho-D-ribosyl)imidazole-4-carboxamide from 5-amino-1-(5-phospho-D-ribosyl)imidazole-4-carboxamide (10-formyl THF route): step 1/1.</text>
</comment>
<comment type="pathway">
    <text evidence="1">Purine metabolism; IMP biosynthesis via de novo pathway; IMP from 5-formamido-1-(5-phospho-D-ribosyl)imidazole-4-carboxamide: step 1/1.</text>
</comment>
<comment type="domain">
    <text evidence="1">The IMP cyclohydrolase activity resides in the N-terminal region.</text>
</comment>
<comment type="similarity">
    <text evidence="1">Belongs to the PurH family.</text>
</comment>
<accession>Q8XMK2</accession>
<reference key="1">
    <citation type="journal article" date="2002" name="Proc. Natl. Acad. Sci. U.S.A.">
        <title>Complete genome sequence of Clostridium perfringens, an anaerobic flesh-eater.</title>
        <authorList>
            <person name="Shimizu T."/>
            <person name="Ohtani K."/>
            <person name="Hirakawa H."/>
            <person name="Ohshima K."/>
            <person name="Yamashita A."/>
            <person name="Shiba T."/>
            <person name="Ogasawara N."/>
            <person name="Hattori M."/>
            <person name="Kuhara S."/>
            <person name="Hayashi H."/>
        </authorList>
    </citation>
    <scope>NUCLEOTIDE SEQUENCE [LARGE SCALE GENOMIC DNA]</scope>
    <source>
        <strain>13 / Type A</strain>
    </source>
</reference>
<organism>
    <name type="scientific">Clostridium perfringens (strain 13 / Type A)</name>
    <dbReference type="NCBI Taxonomy" id="195102"/>
    <lineage>
        <taxon>Bacteria</taxon>
        <taxon>Bacillati</taxon>
        <taxon>Bacillota</taxon>
        <taxon>Clostridia</taxon>
        <taxon>Eubacteriales</taxon>
        <taxon>Clostridiaceae</taxon>
        <taxon>Clostridium</taxon>
    </lineage>
</organism>
<gene>
    <name evidence="1" type="primary">purH</name>
    <name type="ordered locus">CPE0686</name>
</gene>
<name>PUR9_CLOPE</name>
<feature type="chain" id="PRO_0000192085" description="Bifunctional purine biosynthesis protein PurH">
    <location>
        <begin position="1"/>
        <end position="501"/>
    </location>
</feature>
<feature type="domain" description="MGS-like" evidence="2">
    <location>
        <begin position="1"/>
        <end position="144"/>
    </location>
</feature>
<dbReference type="EC" id="2.1.2.3" evidence="1"/>
<dbReference type="EC" id="3.5.4.10" evidence="1"/>
<dbReference type="EMBL" id="BA000016">
    <property type="protein sequence ID" value="BAB80392.1"/>
    <property type="molecule type" value="Genomic_DNA"/>
</dbReference>
<dbReference type="RefSeq" id="WP_011009972.1">
    <property type="nucleotide sequence ID" value="NC_003366.1"/>
</dbReference>
<dbReference type="SMR" id="Q8XMK2"/>
<dbReference type="STRING" id="195102.gene:10489947"/>
<dbReference type="KEGG" id="cpe:CPE0686"/>
<dbReference type="HOGENOM" id="CLU_016316_5_2_9"/>
<dbReference type="UniPathway" id="UPA00074">
    <property type="reaction ID" value="UER00133"/>
</dbReference>
<dbReference type="UniPathway" id="UPA00074">
    <property type="reaction ID" value="UER00135"/>
</dbReference>
<dbReference type="Proteomes" id="UP000000818">
    <property type="component" value="Chromosome"/>
</dbReference>
<dbReference type="GO" id="GO:0005829">
    <property type="term" value="C:cytosol"/>
    <property type="evidence" value="ECO:0007669"/>
    <property type="project" value="TreeGrafter"/>
</dbReference>
<dbReference type="GO" id="GO:0003937">
    <property type="term" value="F:IMP cyclohydrolase activity"/>
    <property type="evidence" value="ECO:0007669"/>
    <property type="project" value="UniProtKB-UniRule"/>
</dbReference>
<dbReference type="GO" id="GO:0004643">
    <property type="term" value="F:phosphoribosylaminoimidazolecarboxamide formyltransferase activity"/>
    <property type="evidence" value="ECO:0007669"/>
    <property type="project" value="UniProtKB-UniRule"/>
</dbReference>
<dbReference type="GO" id="GO:0006189">
    <property type="term" value="P:'de novo' IMP biosynthetic process"/>
    <property type="evidence" value="ECO:0007669"/>
    <property type="project" value="UniProtKB-UniRule"/>
</dbReference>
<dbReference type="CDD" id="cd01421">
    <property type="entry name" value="IMPCH"/>
    <property type="match status" value="1"/>
</dbReference>
<dbReference type="FunFam" id="3.40.140.20:FF:000001">
    <property type="entry name" value="Bifunctional purine biosynthesis protein PurH"/>
    <property type="match status" value="1"/>
</dbReference>
<dbReference type="FunFam" id="3.40.140.20:FF:000002">
    <property type="entry name" value="Bifunctional purine biosynthesis protein PurH"/>
    <property type="match status" value="1"/>
</dbReference>
<dbReference type="FunFam" id="3.40.50.1380:FF:000001">
    <property type="entry name" value="Bifunctional purine biosynthesis protein PurH"/>
    <property type="match status" value="1"/>
</dbReference>
<dbReference type="Gene3D" id="3.40.140.20">
    <property type="match status" value="2"/>
</dbReference>
<dbReference type="Gene3D" id="3.40.50.1380">
    <property type="entry name" value="Methylglyoxal synthase-like domain"/>
    <property type="match status" value="1"/>
</dbReference>
<dbReference type="HAMAP" id="MF_00139">
    <property type="entry name" value="PurH"/>
    <property type="match status" value="1"/>
</dbReference>
<dbReference type="InterPro" id="IPR024051">
    <property type="entry name" value="AICAR_Tfase_dup_dom_sf"/>
</dbReference>
<dbReference type="InterPro" id="IPR016193">
    <property type="entry name" value="Cytidine_deaminase-like"/>
</dbReference>
<dbReference type="InterPro" id="IPR011607">
    <property type="entry name" value="MGS-like_dom"/>
</dbReference>
<dbReference type="InterPro" id="IPR036914">
    <property type="entry name" value="MGS-like_dom_sf"/>
</dbReference>
<dbReference type="InterPro" id="IPR002695">
    <property type="entry name" value="PurH-like"/>
</dbReference>
<dbReference type="NCBIfam" id="NF002049">
    <property type="entry name" value="PRK00881.1"/>
    <property type="match status" value="1"/>
</dbReference>
<dbReference type="NCBIfam" id="TIGR00355">
    <property type="entry name" value="purH"/>
    <property type="match status" value="1"/>
</dbReference>
<dbReference type="PANTHER" id="PTHR11692:SF0">
    <property type="entry name" value="BIFUNCTIONAL PURINE BIOSYNTHESIS PROTEIN ATIC"/>
    <property type="match status" value="1"/>
</dbReference>
<dbReference type="PANTHER" id="PTHR11692">
    <property type="entry name" value="BIFUNCTIONAL PURINE BIOSYNTHESIS PROTEIN PURH"/>
    <property type="match status" value="1"/>
</dbReference>
<dbReference type="Pfam" id="PF01808">
    <property type="entry name" value="AICARFT_IMPCHas"/>
    <property type="match status" value="1"/>
</dbReference>
<dbReference type="Pfam" id="PF02142">
    <property type="entry name" value="MGS"/>
    <property type="match status" value="1"/>
</dbReference>
<dbReference type="PIRSF" id="PIRSF000414">
    <property type="entry name" value="AICARFT_IMPCHas"/>
    <property type="match status" value="1"/>
</dbReference>
<dbReference type="SMART" id="SM00798">
    <property type="entry name" value="AICARFT_IMPCHas"/>
    <property type="match status" value="1"/>
</dbReference>
<dbReference type="SMART" id="SM00851">
    <property type="entry name" value="MGS"/>
    <property type="match status" value="1"/>
</dbReference>
<dbReference type="SUPFAM" id="SSF53927">
    <property type="entry name" value="Cytidine deaminase-like"/>
    <property type="match status" value="1"/>
</dbReference>
<dbReference type="SUPFAM" id="SSF52335">
    <property type="entry name" value="Methylglyoxal synthase-like"/>
    <property type="match status" value="1"/>
</dbReference>
<dbReference type="PROSITE" id="PS51855">
    <property type="entry name" value="MGS"/>
    <property type="match status" value="1"/>
</dbReference>
<protein>
    <recommendedName>
        <fullName evidence="1">Bifunctional purine biosynthesis protein PurH</fullName>
    </recommendedName>
    <domain>
        <recommendedName>
            <fullName evidence="1">Phosphoribosylaminoimidazolecarboxamide formyltransferase</fullName>
            <ecNumber evidence="1">2.1.2.3</ecNumber>
        </recommendedName>
        <alternativeName>
            <fullName evidence="1">AICAR transformylase</fullName>
        </alternativeName>
    </domain>
    <domain>
        <recommendedName>
            <fullName evidence="1">IMP cyclohydrolase</fullName>
            <ecNumber evidence="1">3.5.4.10</ecNumber>
        </recommendedName>
        <alternativeName>
            <fullName evidence="1">ATIC</fullName>
        </alternativeName>
        <alternativeName>
            <fullName evidence="1">IMP synthase</fullName>
        </alternativeName>
        <alternativeName>
            <fullName evidence="1">Inosinicase</fullName>
        </alternativeName>
    </domain>
</protein>
<keyword id="KW-0378">Hydrolase</keyword>
<keyword id="KW-0511">Multifunctional enzyme</keyword>
<keyword id="KW-0658">Purine biosynthesis</keyword>
<keyword id="KW-1185">Reference proteome</keyword>
<keyword id="KW-0808">Transferase</keyword>
<sequence length="501" mass="56125">MKKRALISVFDKDGVLELAKFLRDRDVEIISSGGTYKYLKENNIEVKEISEITDFPEMLDGRVKTLHPLVHAGILAIRDNKEHMKTLEEREINTIDYVVVNLYPFFEKVREDLSFEEKVEFIDIGGPTMLRAAAKNFKDVVVLSDKKDYEKVMNEIKENNCVSFKLRKTLAGKVFNLMSAYDAAISNFLLEGEEEYPEYLSVSYKKIQDLRYGENPHQGAAYYSSTEFDGAMNSFEILNGKALSYNNIKDLDIAWKVACEFEETACCALKHNTPCGVAVGENSKEVYLKAYDADPVSIFGGIVAINRKIDKATAEEMVKIFLEVVAAPDFDEDALEVLRTKKNLRVIKCKNTPQAKNYMVTVDGGILVQGEDNKLANEYKVVTEKEPTEMELRDMIFGMKVVKYVKSNAIVVVKDGVATGIGGGQVNRIWATKEALERGKGGAVLASDAFFPFRDCVDEAAKNGIKAIIQPGGSIRDEESIEACNEHGISMVFTGVRHFKH</sequence>
<evidence type="ECO:0000255" key="1">
    <source>
        <dbReference type="HAMAP-Rule" id="MF_00139"/>
    </source>
</evidence>
<evidence type="ECO:0000255" key="2">
    <source>
        <dbReference type="PROSITE-ProRule" id="PRU01202"/>
    </source>
</evidence>